<feature type="chain" id="PRO_0000117684" description="NAD(P)H-quinone oxidoreductase subunit 2">
    <location>
        <begin position="1"/>
        <end position="521"/>
    </location>
</feature>
<feature type="transmembrane region" description="Helical" evidence="1">
    <location>
        <begin position="14"/>
        <end position="34"/>
    </location>
</feature>
<feature type="transmembrane region" description="Helical" evidence="1">
    <location>
        <begin position="42"/>
        <end position="62"/>
    </location>
</feature>
<feature type="transmembrane region" description="Helical" evidence="1">
    <location>
        <begin position="79"/>
        <end position="99"/>
    </location>
</feature>
<feature type="transmembrane region" description="Helical" evidence="1">
    <location>
        <begin position="109"/>
        <end position="129"/>
    </location>
</feature>
<feature type="transmembrane region" description="Helical" evidence="1">
    <location>
        <begin position="132"/>
        <end position="152"/>
    </location>
</feature>
<feature type="transmembrane region" description="Helical" evidence="1">
    <location>
        <begin position="167"/>
        <end position="187"/>
    </location>
</feature>
<feature type="transmembrane region" description="Helical" evidence="1">
    <location>
        <begin position="207"/>
        <end position="227"/>
    </location>
</feature>
<feature type="transmembrane region" description="Helical" evidence="1">
    <location>
        <begin position="241"/>
        <end position="261"/>
    </location>
</feature>
<feature type="transmembrane region" description="Helical" evidence="1">
    <location>
        <begin position="275"/>
        <end position="295"/>
    </location>
</feature>
<feature type="transmembrane region" description="Helical" evidence="1">
    <location>
        <begin position="303"/>
        <end position="323"/>
    </location>
</feature>
<feature type="transmembrane region" description="Helical" evidence="1">
    <location>
        <begin position="331"/>
        <end position="351"/>
    </location>
</feature>
<feature type="transmembrane region" description="Helical" evidence="1">
    <location>
        <begin position="375"/>
        <end position="395"/>
    </location>
</feature>
<feature type="transmembrane region" description="Helical" evidence="1">
    <location>
        <begin position="397"/>
        <end position="417"/>
    </location>
</feature>
<feature type="transmembrane region" description="Helical" evidence="1">
    <location>
        <begin position="463"/>
        <end position="483"/>
    </location>
</feature>
<gene>
    <name evidence="1" type="primary">ndhB</name>
    <name type="ordered locus">Synpcc7942_1415</name>
</gene>
<proteinExistence type="inferred from homology"/>
<keyword id="KW-0472">Membrane</keyword>
<keyword id="KW-0520">NAD</keyword>
<keyword id="KW-0521">NADP</keyword>
<keyword id="KW-0618">Plastoquinone</keyword>
<keyword id="KW-0874">Quinone</keyword>
<keyword id="KW-1185">Reference proteome</keyword>
<keyword id="KW-0793">Thylakoid</keyword>
<keyword id="KW-1278">Translocase</keyword>
<keyword id="KW-0812">Transmembrane</keyword>
<keyword id="KW-1133">Transmembrane helix</keyword>
<keyword id="KW-0813">Transport</keyword>
<sequence length="521" mass="55070">MDFLTLAGQLNAGVILPEGIVIVTLLTVLVTDLILGRQSLRLTPALAITGLSAAIAVLTLQWNTSQNLAFLGGFNGDNLSIVFRGIVLLSAAVTILLSIRYVEQSGTSLGEFITILLTASLGGMFLSGANELVTIFVSLETLSISSYLLTGYMKRDPRSNEAALKYLLIGAASSAIFLYGVSLLYGLAGGETQLPAIAEKLGEAQPLALLISLIFVIAGIAFKISAVPFHQWTPDVYEGSPTPIVAFLSVGSKAAGFALAIRLLVTAYPALTEQWHFVFTALAILSLVLGNVVALAQTSMKRLLAYSSIAQAGFVMIGLIAGTEAGYSSMVYYLLIYLFMNLGGFACVILFSLRTGTDQISEYAGLYQKDPLVTLGLSLCLLSLGGIPPLAGFFGKLYLFWAGWQAGLYGLVLLALITSVISIYYYIRVIKMMVVKEPQEMSESVRNYPETNWNLPGMQPLRAGLVVCVIATAVAGILSNPLFNLASASVSGSSFLGLAPAAEVVTTTATPVALSEPPAAS</sequence>
<name>NU2C_SYNE7</name>
<evidence type="ECO:0000255" key="1">
    <source>
        <dbReference type="HAMAP-Rule" id="MF_00445"/>
    </source>
</evidence>
<accession>P29801</accession>
<accession>Q31NC4</accession>
<comment type="function">
    <text evidence="1">NDH-1 shuttles electrons from an unknown electron donor, via FMN and iron-sulfur (Fe-S) centers, to quinones in the respiratory and/or the photosynthetic chain. The immediate electron acceptor for the enzyme in this species is believed to be plastoquinone. Couples the redox reaction to proton translocation, and thus conserves the redox energy in a proton gradient. Cyanobacterial NDH-1 also plays a role in inorganic carbon-concentration.</text>
</comment>
<comment type="catalytic activity">
    <reaction evidence="1">
        <text>a plastoquinone + NADH + (n+1) H(+)(in) = a plastoquinol + NAD(+) + n H(+)(out)</text>
        <dbReference type="Rhea" id="RHEA:42608"/>
        <dbReference type="Rhea" id="RHEA-COMP:9561"/>
        <dbReference type="Rhea" id="RHEA-COMP:9562"/>
        <dbReference type="ChEBI" id="CHEBI:15378"/>
        <dbReference type="ChEBI" id="CHEBI:17757"/>
        <dbReference type="ChEBI" id="CHEBI:57540"/>
        <dbReference type="ChEBI" id="CHEBI:57945"/>
        <dbReference type="ChEBI" id="CHEBI:62192"/>
    </reaction>
</comment>
<comment type="catalytic activity">
    <reaction evidence="1">
        <text>a plastoquinone + NADPH + (n+1) H(+)(in) = a plastoquinol + NADP(+) + n H(+)(out)</text>
        <dbReference type="Rhea" id="RHEA:42612"/>
        <dbReference type="Rhea" id="RHEA-COMP:9561"/>
        <dbReference type="Rhea" id="RHEA-COMP:9562"/>
        <dbReference type="ChEBI" id="CHEBI:15378"/>
        <dbReference type="ChEBI" id="CHEBI:17757"/>
        <dbReference type="ChEBI" id="CHEBI:57783"/>
        <dbReference type="ChEBI" id="CHEBI:58349"/>
        <dbReference type="ChEBI" id="CHEBI:62192"/>
    </reaction>
</comment>
<comment type="subunit">
    <text evidence="1">NDH-1 can be composed of about 15 different subunits; different subcomplexes with different compositions have been identified which probably have different functions.</text>
</comment>
<comment type="subcellular location">
    <subcellularLocation>
        <location evidence="1">Cellular thylakoid membrane</location>
        <topology evidence="1">Multi-pass membrane protein</topology>
    </subcellularLocation>
</comment>
<comment type="similarity">
    <text evidence="1">Belongs to the complex I subunit 2 family.</text>
</comment>
<reference key="1">
    <citation type="journal article" date="1993" name="Plant Physiol.">
        <title>High CO2 concentration alleviates the block in photosynthetic electron transport in an ndhB-inactivated mutant of Synechococcus sp. PCC 7942.</title>
        <authorList>
            <person name="Marco E."/>
            <person name="Ohad N."/>
            <person name="Schwarz R."/>
            <person name="Liemen-Hurwitz J."/>
            <person name="Gabay C."/>
            <person name="Kaplan A."/>
        </authorList>
    </citation>
    <scope>NUCLEOTIDE SEQUENCE [GENOMIC DNA]</scope>
</reference>
<reference key="2">
    <citation type="submission" date="2005-08" db="EMBL/GenBank/DDBJ databases">
        <title>Complete sequence of chromosome 1 of Synechococcus elongatus PCC 7942.</title>
        <authorList>
            <consortium name="US DOE Joint Genome Institute"/>
            <person name="Copeland A."/>
            <person name="Lucas S."/>
            <person name="Lapidus A."/>
            <person name="Barry K."/>
            <person name="Detter J.C."/>
            <person name="Glavina T."/>
            <person name="Hammon N."/>
            <person name="Israni S."/>
            <person name="Pitluck S."/>
            <person name="Schmutz J."/>
            <person name="Larimer F."/>
            <person name="Land M."/>
            <person name="Kyrpides N."/>
            <person name="Lykidis A."/>
            <person name="Golden S."/>
            <person name="Richardson P."/>
        </authorList>
    </citation>
    <scope>NUCLEOTIDE SEQUENCE [LARGE SCALE GENOMIC DNA]</scope>
    <source>
        <strain>ATCC 33912 / PCC 7942 / FACHB-805</strain>
    </source>
</reference>
<dbReference type="EC" id="7.1.1.-" evidence="1"/>
<dbReference type="EMBL" id="X65027">
    <property type="protein sequence ID" value="CAA46161.1"/>
    <property type="molecule type" value="Genomic_DNA"/>
</dbReference>
<dbReference type="EMBL" id="CP000100">
    <property type="protein sequence ID" value="ABB57445.1"/>
    <property type="molecule type" value="Genomic_DNA"/>
</dbReference>
<dbReference type="PIR" id="S19921">
    <property type="entry name" value="DNYC27"/>
</dbReference>
<dbReference type="RefSeq" id="WP_011242454.1">
    <property type="nucleotide sequence ID" value="NZ_JACJTX010000004.1"/>
</dbReference>
<dbReference type="SMR" id="P29801"/>
<dbReference type="STRING" id="1140.Synpcc7942_1415"/>
<dbReference type="PaxDb" id="1140-Synpcc7942_1415"/>
<dbReference type="KEGG" id="syf:Synpcc7942_1415"/>
<dbReference type="eggNOG" id="COG1007">
    <property type="taxonomic scope" value="Bacteria"/>
</dbReference>
<dbReference type="HOGENOM" id="CLU_007100_1_5_3"/>
<dbReference type="OrthoDB" id="9811718at2"/>
<dbReference type="BioCyc" id="MetaCyc:SYNPCC7942_1415-MONOMER"/>
<dbReference type="BioCyc" id="SYNEL:SYNPCC7942_1415-MONOMER"/>
<dbReference type="Proteomes" id="UP000889800">
    <property type="component" value="Chromosome"/>
</dbReference>
<dbReference type="GO" id="GO:0031676">
    <property type="term" value="C:plasma membrane-derived thylakoid membrane"/>
    <property type="evidence" value="ECO:0007669"/>
    <property type="project" value="UniProtKB-SubCell"/>
</dbReference>
<dbReference type="GO" id="GO:0008137">
    <property type="term" value="F:NADH dehydrogenase (ubiquinone) activity"/>
    <property type="evidence" value="ECO:0007669"/>
    <property type="project" value="InterPro"/>
</dbReference>
<dbReference type="GO" id="GO:0048038">
    <property type="term" value="F:quinone binding"/>
    <property type="evidence" value="ECO:0007669"/>
    <property type="project" value="UniProtKB-KW"/>
</dbReference>
<dbReference type="GO" id="GO:0042773">
    <property type="term" value="P:ATP synthesis coupled electron transport"/>
    <property type="evidence" value="ECO:0007669"/>
    <property type="project" value="InterPro"/>
</dbReference>
<dbReference type="GO" id="GO:0019684">
    <property type="term" value="P:photosynthesis, light reaction"/>
    <property type="evidence" value="ECO:0007669"/>
    <property type="project" value="UniProtKB-UniRule"/>
</dbReference>
<dbReference type="HAMAP" id="MF_00445">
    <property type="entry name" value="NDH1_NuoN_1"/>
    <property type="match status" value="1"/>
</dbReference>
<dbReference type="InterPro" id="IPR010096">
    <property type="entry name" value="NADH-Q_OxRdtase_suN/2"/>
</dbReference>
<dbReference type="InterPro" id="IPR001750">
    <property type="entry name" value="ND/Mrp_TM"/>
</dbReference>
<dbReference type="InterPro" id="IPR045693">
    <property type="entry name" value="Ndh2_N"/>
</dbReference>
<dbReference type="NCBIfam" id="TIGR01770">
    <property type="entry name" value="NDH_I_N"/>
    <property type="match status" value="1"/>
</dbReference>
<dbReference type="NCBIfam" id="NF002701">
    <property type="entry name" value="PRK02504.1"/>
    <property type="match status" value="1"/>
</dbReference>
<dbReference type="PANTHER" id="PTHR22773">
    <property type="entry name" value="NADH DEHYDROGENASE"/>
    <property type="match status" value="1"/>
</dbReference>
<dbReference type="Pfam" id="PF19530">
    <property type="entry name" value="Ndh2_N"/>
    <property type="match status" value="1"/>
</dbReference>
<dbReference type="Pfam" id="PF00361">
    <property type="entry name" value="Proton_antipo_M"/>
    <property type="match status" value="1"/>
</dbReference>
<dbReference type="PRINTS" id="PR01434">
    <property type="entry name" value="NADHDHGNASE5"/>
</dbReference>
<protein>
    <recommendedName>
        <fullName evidence="1">NAD(P)H-quinone oxidoreductase subunit 2</fullName>
        <ecNumber evidence="1">7.1.1.-</ecNumber>
    </recommendedName>
    <alternativeName>
        <fullName evidence="1">NAD(P)H dehydrogenase subunit 2</fullName>
    </alternativeName>
    <alternativeName>
        <fullName evidence="1">NADH-plastoquinone oxidoreductase subunit 2</fullName>
    </alternativeName>
    <alternativeName>
        <fullName evidence="1">NDH-1, subunit 2</fullName>
    </alternativeName>
</protein>
<organism>
    <name type="scientific">Synechococcus elongatus (strain ATCC 33912 / PCC 7942 / FACHB-805)</name>
    <name type="common">Anacystis nidulans R2</name>
    <dbReference type="NCBI Taxonomy" id="1140"/>
    <lineage>
        <taxon>Bacteria</taxon>
        <taxon>Bacillati</taxon>
        <taxon>Cyanobacteriota</taxon>
        <taxon>Cyanophyceae</taxon>
        <taxon>Synechococcales</taxon>
        <taxon>Synechococcaceae</taxon>
        <taxon>Synechococcus</taxon>
    </lineage>
</organism>